<keyword id="KW-0963">Cytoplasm</keyword>
<keyword id="KW-0255">Endonuclease</keyword>
<keyword id="KW-0378">Hydrolase</keyword>
<keyword id="KW-0460">Magnesium</keyword>
<keyword id="KW-0479">Metal-binding</keyword>
<keyword id="KW-0507">mRNA processing</keyword>
<keyword id="KW-0540">Nuclease</keyword>
<keyword id="KW-1185">Reference proteome</keyword>
<keyword id="KW-0694">RNA-binding</keyword>
<keyword id="KW-0698">rRNA processing</keyword>
<keyword id="KW-0699">rRNA-binding</keyword>
<keyword id="KW-0819">tRNA processing</keyword>
<evidence type="ECO:0000255" key="1">
    <source>
        <dbReference type="HAMAP-Rule" id="MF_00104"/>
    </source>
</evidence>
<comment type="function">
    <text evidence="1">Digests double-stranded RNA. Involved in the processing of primary rRNA transcript to yield the immediate precursors to the large and small rRNAs (23S and 16S). Processes some mRNAs, and tRNAs when they are encoded in the rRNA operon. Processes pre-crRNA and tracrRNA of type II CRISPR loci if present in the organism.</text>
</comment>
<comment type="catalytic activity">
    <reaction evidence="1">
        <text>Endonucleolytic cleavage to 5'-phosphomonoester.</text>
        <dbReference type="EC" id="3.1.26.3"/>
    </reaction>
</comment>
<comment type="cofactor">
    <cofactor evidence="1">
        <name>Mg(2+)</name>
        <dbReference type="ChEBI" id="CHEBI:18420"/>
    </cofactor>
</comment>
<comment type="subunit">
    <text evidence="1">Homodimer.</text>
</comment>
<comment type="subcellular location">
    <subcellularLocation>
        <location evidence="1">Cytoplasm</location>
    </subcellularLocation>
</comment>
<comment type="similarity">
    <text evidence="1">Belongs to the ribonuclease III family.</text>
</comment>
<proteinExistence type="inferred from homology"/>
<feature type="chain" id="PRO_0000228503" description="Ribonuclease 3">
    <location>
        <begin position="1"/>
        <end position="232"/>
    </location>
</feature>
<feature type="domain" description="RNase III" evidence="1">
    <location>
        <begin position="9"/>
        <end position="131"/>
    </location>
</feature>
<feature type="domain" description="DRBM" evidence="1">
    <location>
        <begin position="158"/>
        <end position="228"/>
    </location>
</feature>
<feature type="active site" evidence="1">
    <location>
        <position position="48"/>
    </location>
</feature>
<feature type="active site" evidence="1">
    <location>
        <position position="120"/>
    </location>
</feature>
<feature type="binding site" evidence="1">
    <location>
        <position position="44"/>
    </location>
    <ligand>
        <name>Mg(2+)</name>
        <dbReference type="ChEBI" id="CHEBI:18420"/>
    </ligand>
</feature>
<feature type="binding site" evidence="1">
    <location>
        <position position="117"/>
    </location>
    <ligand>
        <name>Mg(2+)</name>
        <dbReference type="ChEBI" id="CHEBI:18420"/>
    </ligand>
</feature>
<feature type="binding site" evidence="1">
    <location>
        <position position="120"/>
    </location>
    <ligand>
        <name>Mg(2+)</name>
        <dbReference type="ChEBI" id="CHEBI:18420"/>
    </ligand>
</feature>
<organism>
    <name type="scientific">Blochmanniella floridana</name>
    <dbReference type="NCBI Taxonomy" id="203907"/>
    <lineage>
        <taxon>Bacteria</taxon>
        <taxon>Pseudomonadati</taxon>
        <taxon>Pseudomonadota</taxon>
        <taxon>Gammaproteobacteria</taxon>
        <taxon>Enterobacterales</taxon>
        <taxon>Enterobacteriaceae</taxon>
        <taxon>ant endosymbionts</taxon>
        <taxon>Candidatus Blochmanniella</taxon>
    </lineage>
</organism>
<protein>
    <recommendedName>
        <fullName evidence="1">Ribonuclease 3</fullName>
        <ecNumber evidence="1">3.1.26.3</ecNumber>
    </recommendedName>
    <alternativeName>
        <fullName evidence="1">Ribonuclease III</fullName>
        <shortName evidence="1">RNase III</shortName>
    </alternativeName>
</protein>
<gene>
    <name evidence="1" type="primary">rnc</name>
    <name type="ordered locus">Bfl540</name>
</gene>
<sequence>MQCIKCIEINLLQKKLGYFFHTVDLLLRALTHRSFSNKHNERLEFLGDSILNYSITNILYHRYNHMDEGDMSRIRSSLVCSRTLVELAKEFKLGNCLKLGQGELKNKGYNRESILADTVEAIIGGIFLDSNIKTIEMLIAFWYQFRLNKIDLEDKQKDPKTRLQEYLQHHHLPLPIYCINQVQGQAHDQIFIMNCQVSSLKYSVMGRGSSRRKAEQDAAENALKFLIEINND</sequence>
<reference key="1">
    <citation type="journal article" date="2003" name="Proc. Natl. Acad. Sci. U.S.A.">
        <title>The genome sequence of Blochmannia floridanus: comparative analysis of reduced genomes.</title>
        <authorList>
            <person name="Gil R."/>
            <person name="Silva F.J."/>
            <person name="Zientz E."/>
            <person name="Delmotte F."/>
            <person name="Gonzalez-Candelas F."/>
            <person name="Latorre A."/>
            <person name="Rausell C."/>
            <person name="Kamerbeek J."/>
            <person name="Gadau J."/>
            <person name="Hoelldobler B."/>
            <person name="van Ham R.C.H.J."/>
            <person name="Gross R."/>
            <person name="Moya A."/>
        </authorList>
    </citation>
    <scope>NUCLEOTIDE SEQUENCE [LARGE SCALE GENOMIC DNA]</scope>
</reference>
<dbReference type="EC" id="3.1.26.3" evidence="1"/>
<dbReference type="EMBL" id="BX248583">
    <property type="protein sequence ID" value="CAD83226.1"/>
    <property type="molecule type" value="Genomic_DNA"/>
</dbReference>
<dbReference type="SMR" id="Q7VRR0"/>
<dbReference type="STRING" id="203907.Bfl540"/>
<dbReference type="KEGG" id="bfl:Bfl540"/>
<dbReference type="eggNOG" id="COG0571">
    <property type="taxonomic scope" value="Bacteria"/>
</dbReference>
<dbReference type="HOGENOM" id="CLU_000907_1_1_6"/>
<dbReference type="Proteomes" id="UP000002192">
    <property type="component" value="Chromosome"/>
</dbReference>
<dbReference type="GO" id="GO:0005737">
    <property type="term" value="C:cytoplasm"/>
    <property type="evidence" value="ECO:0007669"/>
    <property type="project" value="UniProtKB-SubCell"/>
</dbReference>
<dbReference type="GO" id="GO:0003725">
    <property type="term" value="F:double-stranded RNA binding"/>
    <property type="evidence" value="ECO:0007669"/>
    <property type="project" value="TreeGrafter"/>
</dbReference>
<dbReference type="GO" id="GO:0046872">
    <property type="term" value="F:metal ion binding"/>
    <property type="evidence" value="ECO:0007669"/>
    <property type="project" value="UniProtKB-KW"/>
</dbReference>
<dbReference type="GO" id="GO:0004525">
    <property type="term" value="F:ribonuclease III activity"/>
    <property type="evidence" value="ECO:0007669"/>
    <property type="project" value="UniProtKB-UniRule"/>
</dbReference>
<dbReference type="GO" id="GO:0019843">
    <property type="term" value="F:rRNA binding"/>
    <property type="evidence" value="ECO:0007669"/>
    <property type="project" value="UniProtKB-KW"/>
</dbReference>
<dbReference type="GO" id="GO:0006397">
    <property type="term" value="P:mRNA processing"/>
    <property type="evidence" value="ECO:0007669"/>
    <property type="project" value="UniProtKB-UniRule"/>
</dbReference>
<dbReference type="GO" id="GO:0010468">
    <property type="term" value="P:regulation of gene expression"/>
    <property type="evidence" value="ECO:0007669"/>
    <property type="project" value="TreeGrafter"/>
</dbReference>
<dbReference type="GO" id="GO:0006364">
    <property type="term" value="P:rRNA processing"/>
    <property type="evidence" value="ECO:0007669"/>
    <property type="project" value="UniProtKB-UniRule"/>
</dbReference>
<dbReference type="GO" id="GO:0008033">
    <property type="term" value="P:tRNA processing"/>
    <property type="evidence" value="ECO:0007669"/>
    <property type="project" value="UniProtKB-KW"/>
</dbReference>
<dbReference type="CDD" id="cd10845">
    <property type="entry name" value="DSRM_RNAse_III_family"/>
    <property type="match status" value="1"/>
</dbReference>
<dbReference type="CDD" id="cd00593">
    <property type="entry name" value="RIBOc"/>
    <property type="match status" value="1"/>
</dbReference>
<dbReference type="FunFam" id="1.10.1520.10:FF:000001">
    <property type="entry name" value="Ribonuclease 3"/>
    <property type="match status" value="1"/>
</dbReference>
<dbReference type="FunFam" id="3.30.160.20:FF:000003">
    <property type="entry name" value="Ribonuclease 3"/>
    <property type="match status" value="1"/>
</dbReference>
<dbReference type="Gene3D" id="3.30.160.20">
    <property type="match status" value="1"/>
</dbReference>
<dbReference type="Gene3D" id="1.10.1520.10">
    <property type="entry name" value="Ribonuclease III domain"/>
    <property type="match status" value="1"/>
</dbReference>
<dbReference type="HAMAP" id="MF_00104">
    <property type="entry name" value="RNase_III"/>
    <property type="match status" value="1"/>
</dbReference>
<dbReference type="InterPro" id="IPR014720">
    <property type="entry name" value="dsRBD_dom"/>
</dbReference>
<dbReference type="InterPro" id="IPR011907">
    <property type="entry name" value="RNase_III"/>
</dbReference>
<dbReference type="InterPro" id="IPR000999">
    <property type="entry name" value="RNase_III_dom"/>
</dbReference>
<dbReference type="InterPro" id="IPR036389">
    <property type="entry name" value="RNase_III_sf"/>
</dbReference>
<dbReference type="NCBIfam" id="TIGR02191">
    <property type="entry name" value="RNaseIII"/>
    <property type="match status" value="1"/>
</dbReference>
<dbReference type="PANTHER" id="PTHR11207:SF0">
    <property type="entry name" value="RIBONUCLEASE 3"/>
    <property type="match status" value="1"/>
</dbReference>
<dbReference type="PANTHER" id="PTHR11207">
    <property type="entry name" value="RIBONUCLEASE III"/>
    <property type="match status" value="1"/>
</dbReference>
<dbReference type="Pfam" id="PF00035">
    <property type="entry name" value="dsrm"/>
    <property type="match status" value="1"/>
</dbReference>
<dbReference type="Pfam" id="PF14622">
    <property type="entry name" value="Ribonucleas_3_3"/>
    <property type="match status" value="1"/>
</dbReference>
<dbReference type="SMART" id="SM00358">
    <property type="entry name" value="DSRM"/>
    <property type="match status" value="1"/>
</dbReference>
<dbReference type="SMART" id="SM00535">
    <property type="entry name" value="RIBOc"/>
    <property type="match status" value="1"/>
</dbReference>
<dbReference type="SUPFAM" id="SSF54768">
    <property type="entry name" value="dsRNA-binding domain-like"/>
    <property type="match status" value="1"/>
</dbReference>
<dbReference type="SUPFAM" id="SSF69065">
    <property type="entry name" value="RNase III domain-like"/>
    <property type="match status" value="1"/>
</dbReference>
<dbReference type="PROSITE" id="PS50137">
    <property type="entry name" value="DS_RBD"/>
    <property type="match status" value="1"/>
</dbReference>
<dbReference type="PROSITE" id="PS00517">
    <property type="entry name" value="RNASE_3_1"/>
    <property type="match status" value="1"/>
</dbReference>
<dbReference type="PROSITE" id="PS50142">
    <property type="entry name" value="RNASE_3_2"/>
    <property type="match status" value="1"/>
</dbReference>
<name>RNC_BLOFL</name>
<accession>Q7VRR0</accession>